<proteinExistence type="evidence at transcript level"/>
<feature type="chain" id="PRO_0000343172" description="Two pore calcium channel protein 1B">
    <location>
        <begin position="1"/>
        <end position="735"/>
    </location>
</feature>
<feature type="topological domain" description="Cytoplasmic" evidence="2">
    <location>
        <begin position="1"/>
        <end position="76"/>
    </location>
</feature>
<feature type="transmembrane region" description="Helical; Name=S1 of repeat I" evidence="2">
    <location>
        <begin position="77"/>
        <end position="97"/>
    </location>
</feature>
<feature type="topological domain" description="Extracellular" evidence="2">
    <location>
        <begin position="98"/>
        <end position="125"/>
    </location>
</feature>
<feature type="transmembrane region" description="Helical; Name=S2 of repeat I" evidence="2">
    <location>
        <begin position="126"/>
        <end position="146"/>
    </location>
</feature>
<feature type="topological domain" description="Cytoplasmic" evidence="2">
    <location>
        <begin position="147"/>
        <end position="161"/>
    </location>
</feature>
<feature type="transmembrane region" description="Helical; Name=S3 of repeat I" evidence="2">
    <location>
        <begin position="162"/>
        <end position="182"/>
    </location>
</feature>
<feature type="topological domain" description="Extracellular" evidence="2">
    <location>
        <position position="183"/>
    </location>
</feature>
<feature type="transmembrane region" description="Helical; Voltage-sensor; Name=S4 of repeat I" evidence="2">
    <location>
        <begin position="184"/>
        <end position="202"/>
    </location>
</feature>
<feature type="topological domain" description="Cytoplasmic" evidence="2">
    <location>
        <begin position="203"/>
        <end position="208"/>
    </location>
</feature>
<feature type="transmembrane region" description="Helical; Name=S5 of repeat I" evidence="2">
    <location>
        <begin position="209"/>
        <end position="229"/>
    </location>
</feature>
<feature type="topological domain" description="Extracellular" evidence="2">
    <location>
        <begin position="230"/>
        <end position="248"/>
    </location>
</feature>
<feature type="intramembrane region" description="Pore-forming; Name=Pore-forming 1">
    <location>
        <begin position="249"/>
        <end position="263"/>
    </location>
</feature>
<feature type="topological domain" description="Extracellular" evidence="2">
    <location>
        <begin position="264"/>
        <end position="286"/>
    </location>
</feature>
<feature type="transmembrane region" description="Helical; Name=S6 of repeat I" evidence="2">
    <location>
        <begin position="287"/>
        <end position="307"/>
    </location>
</feature>
<feature type="topological domain" description="Cytoplasmic" evidence="2">
    <location>
        <begin position="308"/>
        <end position="431"/>
    </location>
</feature>
<feature type="transmembrane region" description="Helical; Name=S1 of repeat II" evidence="2">
    <location>
        <begin position="432"/>
        <end position="452"/>
    </location>
</feature>
<feature type="topological domain" description="Extracellular" evidence="2">
    <location>
        <begin position="453"/>
        <end position="470"/>
    </location>
</feature>
<feature type="transmembrane region" description="Helical; Name=S2 of repeat II" evidence="2">
    <location>
        <begin position="471"/>
        <end position="491"/>
    </location>
</feature>
<feature type="topological domain" description="Cytoplasmic" evidence="2">
    <location>
        <begin position="492"/>
        <end position="501"/>
    </location>
</feature>
<feature type="transmembrane region" description="Helical; Name=S3 of repeat II" evidence="2">
    <location>
        <begin position="502"/>
        <end position="522"/>
    </location>
</feature>
<feature type="topological domain" description="Extracellular" evidence="2">
    <location>
        <begin position="523"/>
        <end position="531"/>
    </location>
</feature>
<feature type="transmembrane region" description="Helical; Voltage-sensor; Name=S4 of repeat II" evidence="2">
    <location>
        <begin position="532"/>
        <end position="549"/>
    </location>
</feature>
<feature type="topological domain" description="Cytoplasmic" evidence="2">
    <location>
        <begin position="550"/>
        <end position="560"/>
    </location>
</feature>
<feature type="transmembrane region" description="Helical; Name=S5 of repeat II" evidence="2">
    <location>
        <begin position="561"/>
        <end position="581"/>
    </location>
</feature>
<feature type="topological domain" description="Extracellular" evidence="2">
    <location>
        <begin position="582"/>
        <end position="618"/>
    </location>
</feature>
<feature type="intramembrane region" description="Pore-forming; Name=Pore-forming 2">
    <location>
        <begin position="619"/>
        <end position="633"/>
    </location>
</feature>
<feature type="topological domain" description="Extracellular" evidence="2">
    <location>
        <begin position="634"/>
        <end position="654"/>
    </location>
</feature>
<feature type="transmembrane region" description="Helical; Name=S6 of repeat II" evidence="2">
    <location>
        <begin position="655"/>
        <end position="675"/>
    </location>
</feature>
<feature type="topological domain" description="Cytoplasmic" evidence="2">
    <location>
        <begin position="676"/>
        <end position="735"/>
    </location>
</feature>
<feature type="domain" description="EF-hand 1" evidence="3">
    <location>
        <begin position="325"/>
        <end position="360"/>
    </location>
</feature>
<feature type="domain" description="EF-hand 2" evidence="3">
    <location>
        <begin position="366"/>
        <end position="401"/>
    </location>
</feature>
<feature type="glycosylation site" description="N-linked (GlcNAc...) asparagine" evidence="2">
    <location>
        <position position="460"/>
    </location>
</feature>
<gene>
    <name type="primary">TPC1B</name>
</gene>
<organism>
    <name type="scientific">Nicotiana tabacum</name>
    <name type="common">Common tobacco</name>
    <dbReference type="NCBI Taxonomy" id="4097"/>
    <lineage>
        <taxon>Eukaryota</taxon>
        <taxon>Viridiplantae</taxon>
        <taxon>Streptophyta</taxon>
        <taxon>Embryophyta</taxon>
        <taxon>Tracheophyta</taxon>
        <taxon>Spermatophyta</taxon>
        <taxon>Magnoliopsida</taxon>
        <taxon>eudicotyledons</taxon>
        <taxon>Gunneridae</taxon>
        <taxon>Pentapetalae</taxon>
        <taxon>asterids</taxon>
        <taxon>lamiids</taxon>
        <taxon>Solanales</taxon>
        <taxon>Solanaceae</taxon>
        <taxon>Nicotianoideae</taxon>
        <taxon>Nicotianeae</taxon>
        <taxon>Nicotiana</taxon>
    </lineage>
</organism>
<protein>
    <recommendedName>
        <fullName>Two pore calcium channel protein 1B</fullName>
    </recommendedName>
    <alternativeName>
        <fullName>Voltage-dependent calcium channel protein TPC1B</fullName>
        <shortName>NtTPC1B</shortName>
    </alternativeName>
</protein>
<accession>Q75VR0</accession>
<sequence>MEEYLLPGESSNSCRTRRRSGSIFDRRDAIAHGSAYQKAAALVDLAEDGIGLPEEILEGASFEKAAELYFMFTRFDFLWSLNYLALVVLNFFEKPLWCSKHLAESCNNRDYYYLGELPFLTGAESLIFEGVTLLLLIIHILFPISYEGFNLYWRSLLNRLKVILLLILVADIVVYILLPADFYYLPFRIAPYLRVVFFILNIRELRDSFFILAGMLGTYLNVVALSALFLLFSSWLAYVFFEDTRQGKTTFTSYGTTLYQMFVLFTTSNNPDVWIPAYKDSRWYCLFFVLYVLLGVYFVTNLILAVVYDSFKSELVKQVADKDRLRLRTLKKAFSLIDEANNGLLNEKQCTLLFEELNKYRTLPKISGDDFKSIFNELDDTGDFKINLEEFADLCSAIGLRFQKEDSLPIFEACPNFYHSPASEKLRGFIRGATFEYIIVFVLLVNLVAVIIETTLDIQNNSGQTFWQKVEFTFGWLYVIEMALKVYTYGFENYWRDGQNRFDFIVTWVIVIGETTTFVAPDDLTFLSNGEWIRYLLIARMLRLIRLLMHVERYRAFVATFLTLIPSLMPYLGTIFCILCFYCSLGLQIFGGIVNTGNPNLAQTDLAGNDYLLFNFNDYPNGMVTLFNILVMGNWQVWMQSYKELTGTSWTYAYFVSFYLISVLWLLNLIVAFVLEAFQAEMDLEASARCVDGDDKEAKRERRRNVGTKTRSQRVDFLLHHMLRSELTECSNDNP</sequence>
<evidence type="ECO:0000250" key="1"/>
<evidence type="ECO:0000255" key="2"/>
<evidence type="ECO:0000255" key="3">
    <source>
        <dbReference type="PROSITE-ProRule" id="PRU00448"/>
    </source>
</evidence>
<evidence type="ECO:0000269" key="4">
    <source>
    </source>
</evidence>
<evidence type="ECO:0000269" key="5">
    <source>
    </source>
</evidence>
<evidence type="ECO:0000305" key="6"/>
<comment type="function">
    <text evidence="4">Functions as a voltage-gated inward-rectifying Ca(2+) channel (VDCC) across the plasma membrane that mediates sucrose-induced Ca(2+) influx in autotrophically grown leaf cells. Acts as the major ROS-responsive Ca(2+) channel and is the possible target of Al-dependent inhibition. Plays a regulatory role in defense responses.</text>
</comment>
<comment type="activity regulation">
    <text evidence="4 5">Inhibited by Al(3+), La(3+) and Gd(3+). Up-regulated by H(2)O(2), cryptogein, salicylic acid (SA) and cold shock.</text>
</comment>
<comment type="subunit">
    <text evidence="1">Homodimer.</text>
</comment>
<comment type="subcellular location">
    <subcellularLocation>
        <location evidence="1">Membrane</location>
        <topology evidence="1">Multi-pass membrane protein</topology>
    </subcellularLocation>
</comment>
<comment type="domain">
    <text evidence="1">Each of the two internal repeats contains five hydrophobic transmembrane segments (S1, S2, S3, S5, S6) and one positively charged transmembrane segment (S4). S4 segments probably represent the voltage-sensor and are characterized by a series of positively charged amino acids (By similarity).</text>
</comment>
<comment type="miscellaneous">
    <text>Rescues the Ca(2+) uptake activity in yeast mutant cch1.</text>
</comment>
<comment type="similarity">
    <text evidence="6">Belongs to the calcium channel alpha-1 subunit (TC 1.A.1.11) family. Two pore calcium channel subfamily.</text>
</comment>
<name>TPC1B_TOBAC</name>
<dbReference type="EMBL" id="AB124647">
    <property type="protein sequence ID" value="BAD15100.1"/>
    <property type="molecule type" value="mRNA"/>
</dbReference>
<dbReference type="RefSeq" id="NP_001312977.1">
    <property type="nucleotide sequence ID" value="NM_001326048.1"/>
</dbReference>
<dbReference type="SMR" id="Q75VR0"/>
<dbReference type="STRING" id="4097.Q75VR0"/>
<dbReference type="GlyCosmos" id="Q75VR0">
    <property type="glycosylation" value="1 site, No reported glycans"/>
</dbReference>
<dbReference type="PaxDb" id="4097-Q75VR0"/>
<dbReference type="GeneID" id="107819477"/>
<dbReference type="KEGG" id="nta:107819477"/>
<dbReference type="OrthoDB" id="416585at2759"/>
<dbReference type="Proteomes" id="UP000084051">
    <property type="component" value="Unplaced"/>
</dbReference>
<dbReference type="GO" id="GO:0034702">
    <property type="term" value="C:monoatomic ion channel complex"/>
    <property type="evidence" value="ECO:0007669"/>
    <property type="project" value="UniProtKB-KW"/>
</dbReference>
<dbReference type="GO" id="GO:0000325">
    <property type="term" value="C:plant-type vacuole"/>
    <property type="evidence" value="ECO:0000318"/>
    <property type="project" value="GO_Central"/>
</dbReference>
<dbReference type="GO" id="GO:0005774">
    <property type="term" value="C:vacuolar membrane"/>
    <property type="evidence" value="ECO:0000318"/>
    <property type="project" value="GO_Central"/>
</dbReference>
<dbReference type="GO" id="GO:0005509">
    <property type="term" value="F:calcium ion binding"/>
    <property type="evidence" value="ECO:0007669"/>
    <property type="project" value="InterPro"/>
</dbReference>
<dbReference type="GO" id="GO:0005245">
    <property type="term" value="F:voltage-gated calcium channel activity"/>
    <property type="evidence" value="ECO:0000318"/>
    <property type="project" value="GO_Central"/>
</dbReference>
<dbReference type="GO" id="GO:0006816">
    <property type="term" value="P:calcium ion transport"/>
    <property type="evidence" value="ECO:0000318"/>
    <property type="project" value="GO_Central"/>
</dbReference>
<dbReference type="GO" id="GO:0006952">
    <property type="term" value="P:defense response"/>
    <property type="evidence" value="ECO:0007669"/>
    <property type="project" value="UniProtKB-KW"/>
</dbReference>
<dbReference type="CDD" id="cd00051">
    <property type="entry name" value="EFh"/>
    <property type="match status" value="1"/>
</dbReference>
<dbReference type="FunFam" id="1.10.287.70:FF:000094">
    <property type="entry name" value="Two pore calcium channel protein 1"/>
    <property type="match status" value="1"/>
</dbReference>
<dbReference type="FunFam" id="1.10.287.70:FF:000129">
    <property type="entry name" value="Two pore calcium channel protein 1"/>
    <property type="match status" value="1"/>
</dbReference>
<dbReference type="FunFam" id="1.20.120.350:FF:000055">
    <property type="entry name" value="Two pore calcium channel protein 1"/>
    <property type="match status" value="1"/>
</dbReference>
<dbReference type="Gene3D" id="1.10.287.70">
    <property type="match status" value="2"/>
</dbReference>
<dbReference type="Gene3D" id="1.10.238.10">
    <property type="entry name" value="EF-hand"/>
    <property type="match status" value="1"/>
</dbReference>
<dbReference type="Gene3D" id="1.20.120.350">
    <property type="entry name" value="Voltage-gated potassium channels. Chain C"/>
    <property type="match status" value="1"/>
</dbReference>
<dbReference type="InterPro" id="IPR011992">
    <property type="entry name" value="EF-hand-dom_pair"/>
</dbReference>
<dbReference type="InterPro" id="IPR002048">
    <property type="entry name" value="EF_hand_dom"/>
</dbReference>
<dbReference type="InterPro" id="IPR005821">
    <property type="entry name" value="Ion_trans_dom"/>
</dbReference>
<dbReference type="InterPro" id="IPR044581">
    <property type="entry name" value="TPC1_plant"/>
</dbReference>
<dbReference type="InterPro" id="IPR027359">
    <property type="entry name" value="Volt_channel_dom_sf"/>
</dbReference>
<dbReference type="PANTHER" id="PTHR46988">
    <property type="entry name" value="TWO PORE CALCIUM CHANNEL PROTEIN 1"/>
    <property type="match status" value="1"/>
</dbReference>
<dbReference type="PANTHER" id="PTHR46988:SF2">
    <property type="entry name" value="TWO PORE CALCIUM CHANNEL PROTEIN 1"/>
    <property type="match status" value="1"/>
</dbReference>
<dbReference type="Pfam" id="PF00520">
    <property type="entry name" value="Ion_trans"/>
    <property type="match status" value="2"/>
</dbReference>
<dbReference type="SMART" id="SM00054">
    <property type="entry name" value="EFh"/>
    <property type="match status" value="2"/>
</dbReference>
<dbReference type="SUPFAM" id="SSF47473">
    <property type="entry name" value="EF-hand"/>
    <property type="match status" value="1"/>
</dbReference>
<dbReference type="SUPFAM" id="SSF81324">
    <property type="entry name" value="Voltage-gated potassium channels"/>
    <property type="match status" value="2"/>
</dbReference>
<dbReference type="PROSITE" id="PS50222">
    <property type="entry name" value="EF_HAND_2"/>
    <property type="match status" value="2"/>
</dbReference>
<keyword id="KW-0106">Calcium</keyword>
<keyword id="KW-0107">Calcium channel</keyword>
<keyword id="KW-0109">Calcium transport</keyword>
<keyword id="KW-0325">Glycoprotein</keyword>
<keyword id="KW-0407">Ion channel</keyword>
<keyword id="KW-0406">Ion transport</keyword>
<keyword id="KW-0472">Membrane</keyword>
<keyword id="KW-0611">Plant defense</keyword>
<keyword id="KW-1185">Reference proteome</keyword>
<keyword id="KW-0677">Repeat</keyword>
<keyword id="KW-0812">Transmembrane</keyword>
<keyword id="KW-1133">Transmembrane helix</keyword>
<keyword id="KW-0813">Transport</keyword>
<keyword id="KW-0851">Voltage-gated channel</keyword>
<reference key="1">
    <citation type="journal article" date="2004" name="Biochem. Biophys. Res. Commun.">
        <title>Identification of putative voltage-dependent Ca(2+)-permeable channels involved in cryptogein-induced Ca(2+) transients and defense responses in tobacco BY-2 cells.</title>
        <authorList>
            <person name="Kadota Y."/>
            <person name="Furuichi T."/>
            <person name="Ogasawara Y."/>
            <person name="Goh T."/>
            <person name="Higashi K."/>
            <person name="Muto S."/>
            <person name="Kuchitsu K."/>
        </authorList>
    </citation>
    <scope>NUCLEOTIDE SEQUENCE [MRNA]</scope>
    <source>
        <strain>cv. Bright Yellow 2</strain>
    </source>
</reference>
<reference key="2">
    <citation type="journal article" date="2004" name="Biochem. Biophys. Res. Commun.">
        <title>Aluminum as a specific inhibitor of plant TPC1 Ca(2+) channels.</title>
        <authorList>
            <person name="Kawano T."/>
            <person name="Kadono T."/>
            <person name="Fumoto K."/>
            <person name="Lapeyrie F."/>
            <person name="Kuse M."/>
            <person name="Isobe M."/>
            <person name="Furuichi T."/>
            <person name="Muto S."/>
        </authorList>
    </citation>
    <scope>FUNCTION</scope>
    <scope>ACTIVITY REGULATION</scope>
</reference>
<reference key="3">
    <citation type="journal article" date="2005" name="Biochem. Biophys. Res. Commun.">
        <title>Action of aluminum, novel TPC1-type channel inhibitor, against salicylate-induced and cold-shock-induced calcium influx in tobacco BY-2 cells.</title>
        <authorList>
            <person name="Lin C."/>
            <person name="Yu Y."/>
            <person name="Kadono T."/>
            <person name="Iwata M."/>
            <person name="Umemura K."/>
            <person name="Furuichi T."/>
            <person name="Kuse M."/>
            <person name="Isobe M."/>
            <person name="Yamamoto Y."/>
            <person name="Matsumoto H."/>
            <person name="Yoshizuka K."/>
            <person name="Kawano T."/>
        </authorList>
    </citation>
    <scope>ACTIVITY REGULATION</scope>
</reference>